<accession>P83152</accession>
<sequence length="9" mass="919">MAQDAITAV</sequence>
<comment type="function">
    <text evidence="5">Light-harvesting photosynthetic bile pigment-protein from the phycobiliprotein complex. Allophycocyanin has a maximum absorption at approximately 650 to 653 nanometers.</text>
</comment>
<comment type="subunit">
    <text evidence="1">Heterodimer of an alpha and a beta chain.</text>
</comment>
<comment type="subcellular location">
    <subcellularLocation>
        <location evidence="1">Cellular thylakoid membrane</location>
        <topology evidence="1">Peripheral membrane protein</topology>
        <orientation evidence="1">Cytoplasmic side</orientation>
    </subcellularLocation>
    <text evidence="1">Forms the core of the phycobilisome.</text>
</comment>
<comment type="PTM">
    <text evidence="2">Contains one covalently linked phycocyanobilin chromophore.</text>
</comment>
<comment type="similarity">
    <text evidence="3">Belongs to the phycobiliprotein family.</text>
</comment>
<organism>
    <name type="scientific">Anabaena sp. (strain L31)</name>
    <dbReference type="NCBI Taxonomy" id="29412"/>
    <lineage>
        <taxon>Bacteria</taxon>
        <taxon>Bacillati</taxon>
        <taxon>Cyanobacteriota</taxon>
        <taxon>Cyanophyceae</taxon>
        <taxon>Nostocales</taxon>
        <taxon>Nostocaceae</taxon>
        <taxon>Anabaena</taxon>
    </lineage>
</organism>
<dbReference type="GO" id="GO:0030089">
    <property type="term" value="C:phycobilisome"/>
    <property type="evidence" value="ECO:0007669"/>
    <property type="project" value="UniProtKB-KW"/>
</dbReference>
<dbReference type="GO" id="GO:0031676">
    <property type="term" value="C:plasma membrane-derived thylakoid membrane"/>
    <property type="evidence" value="ECO:0007669"/>
    <property type="project" value="UniProtKB-SubCell"/>
</dbReference>
<dbReference type="GO" id="GO:0015979">
    <property type="term" value="P:photosynthesis"/>
    <property type="evidence" value="ECO:0007669"/>
    <property type="project" value="UniProtKB-KW"/>
</dbReference>
<gene>
    <name evidence="2" type="primary">apcB</name>
</gene>
<feature type="initiator methionine" description="Removed" evidence="4">
    <location>
        <position position="1"/>
    </location>
</feature>
<feature type="chain" id="PRO_0000262931" description="Allophycocyanin beta chain">
    <location>
        <begin position="2"/>
        <end position="9" status="greater than"/>
    </location>
</feature>
<feature type="non-terminal residue">
    <location>
        <position position="9"/>
    </location>
</feature>
<protein>
    <recommendedName>
        <fullName>Allophycocyanin beta chain</fullName>
    </recommendedName>
</protein>
<reference evidence="5" key="1">
    <citation type="submission" date="2001-10" db="UniProtKB">
        <authorList>
            <person name="Apte S.K."/>
            <person name="Uhlemann E."/>
            <person name="Schmid R."/>
            <person name="Altendorf K."/>
        </authorList>
    </citation>
    <scope>PROTEIN SEQUENCE OF 2-9</scope>
</reference>
<proteinExistence type="evidence at protein level"/>
<keyword id="KW-0042">Antenna complex</keyword>
<keyword id="KW-0089">Bile pigment</keyword>
<keyword id="KW-0157">Chromophore</keyword>
<keyword id="KW-0903">Direct protein sequencing</keyword>
<keyword id="KW-0249">Electron transport</keyword>
<keyword id="KW-0472">Membrane</keyword>
<keyword id="KW-0488">Methylation</keyword>
<keyword id="KW-0602">Photosynthesis</keyword>
<keyword id="KW-0605">Phycobilisome</keyword>
<keyword id="KW-0793">Thylakoid</keyword>
<keyword id="KW-0813">Transport</keyword>
<name>APCB_ANASL</name>
<evidence type="ECO:0000250" key="1"/>
<evidence type="ECO:0000250" key="2">
    <source>
        <dbReference type="UniProtKB" id="P00318"/>
    </source>
</evidence>
<evidence type="ECO:0000255" key="3"/>
<evidence type="ECO:0000269" key="4">
    <source ref="1"/>
</evidence>
<evidence type="ECO:0000305" key="5"/>